<gene>
    <name evidence="1" type="primary">fmt</name>
    <name type="ordered locus">PCC7424_0883</name>
</gene>
<dbReference type="EC" id="2.1.2.9" evidence="1"/>
<dbReference type="EMBL" id="CP001291">
    <property type="protein sequence ID" value="ACK69339.1"/>
    <property type="molecule type" value="Genomic_DNA"/>
</dbReference>
<dbReference type="RefSeq" id="WP_012598286.1">
    <property type="nucleotide sequence ID" value="NC_011729.1"/>
</dbReference>
<dbReference type="SMR" id="B7KHD0"/>
<dbReference type="STRING" id="65393.PCC7424_0883"/>
<dbReference type="KEGG" id="cyc:PCC7424_0883"/>
<dbReference type="eggNOG" id="COG0223">
    <property type="taxonomic scope" value="Bacteria"/>
</dbReference>
<dbReference type="HOGENOM" id="CLU_033347_1_1_3"/>
<dbReference type="OrthoDB" id="9802815at2"/>
<dbReference type="Proteomes" id="UP000002384">
    <property type="component" value="Chromosome"/>
</dbReference>
<dbReference type="GO" id="GO:0005829">
    <property type="term" value="C:cytosol"/>
    <property type="evidence" value="ECO:0007669"/>
    <property type="project" value="TreeGrafter"/>
</dbReference>
<dbReference type="GO" id="GO:0004479">
    <property type="term" value="F:methionyl-tRNA formyltransferase activity"/>
    <property type="evidence" value="ECO:0007669"/>
    <property type="project" value="UniProtKB-UniRule"/>
</dbReference>
<dbReference type="CDD" id="cd08646">
    <property type="entry name" value="FMT_core_Met-tRNA-FMT_N"/>
    <property type="match status" value="1"/>
</dbReference>
<dbReference type="CDD" id="cd08704">
    <property type="entry name" value="Met_tRNA_FMT_C"/>
    <property type="match status" value="1"/>
</dbReference>
<dbReference type="FunFam" id="3.40.50.12230:FF:000001">
    <property type="entry name" value="Methionyl-tRNA formyltransferase"/>
    <property type="match status" value="1"/>
</dbReference>
<dbReference type="Gene3D" id="3.40.50.12230">
    <property type="match status" value="1"/>
</dbReference>
<dbReference type="HAMAP" id="MF_00182">
    <property type="entry name" value="Formyl_trans"/>
    <property type="match status" value="1"/>
</dbReference>
<dbReference type="InterPro" id="IPR005794">
    <property type="entry name" value="Fmt"/>
</dbReference>
<dbReference type="InterPro" id="IPR005793">
    <property type="entry name" value="Formyl_trans_C"/>
</dbReference>
<dbReference type="InterPro" id="IPR002376">
    <property type="entry name" value="Formyl_transf_N"/>
</dbReference>
<dbReference type="InterPro" id="IPR036477">
    <property type="entry name" value="Formyl_transf_N_sf"/>
</dbReference>
<dbReference type="InterPro" id="IPR011034">
    <property type="entry name" value="Formyl_transferase-like_C_sf"/>
</dbReference>
<dbReference type="InterPro" id="IPR001555">
    <property type="entry name" value="GART_AS"/>
</dbReference>
<dbReference type="InterPro" id="IPR044135">
    <property type="entry name" value="Met-tRNA-FMT_C"/>
</dbReference>
<dbReference type="InterPro" id="IPR041711">
    <property type="entry name" value="Met-tRNA-FMT_N"/>
</dbReference>
<dbReference type="NCBIfam" id="TIGR00460">
    <property type="entry name" value="fmt"/>
    <property type="match status" value="1"/>
</dbReference>
<dbReference type="PANTHER" id="PTHR11138">
    <property type="entry name" value="METHIONYL-TRNA FORMYLTRANSFERASE"/>
    <property type="match status" value="1"/>
</dbReference>
<dbReference type="PANTHER" id="PTHR11138:SF5">
    <property type="entry name" value="METHIONYL-TRNA FORMYLTRANSFERASE, MITOCHONDRIAL"/>
    <property type="match status" value="1"/>
</dbReference>
<dbReference type="Pfam" id="PF02911">
    <property type="entry name" value="Formyl_trans_C"/>
    <property type="match status" value="1"/>
</dbReference>
<dbReference type="Pfam" id="PF00551">
    <property type="entry name" value="Formyl_trans_N"/>
    <property type="match status" value="1"/>
</dbReference>
<dbReference type="SUPFAM" id="SSF50486">
    <property type="entry name" value="FMT C-terminal domain-like"/>
    <property type="match status" value="1"/>
</dbReference>
<dbReference type="SUPFAM" id="SSF53328">
    <property type="entry name" value="Formyltransferase"/>
    <property type="match status" value="1"/>
</dbReference>
<dbReference type="PROSITE" id="PS00373">
    <property type="entry name" value="GART"/>
    <property type="match status" value="1"/>
</dbReference>
<sequence length="334" mass="37077">MKVVFFGTPQFAVPSLERLLEHSDIDVVAVVTQPDKPRGRGKQLIPSPIKKVALDHQIPIWQPKRVKKNAQTLTKLRETNADAFAVVAYGQILSAEILQMPKLACINVHGSILPKYRGAAPIQWSIYHGETQTGITTMLMDEGMDTGAMLLKAYTPIQLLDNADKIATTLANQGADLLIETLLKLEQGELNPESQNSELATYAPLIQKEDYLINWTRHALQIHNQVRGFYPNCFTTFREQPLKILATAPLGEAYWEHLPSNIAQKIQPQWTTLSSLTSSPGEVVNLIKNLGPIVQTGEGLLLLLQVQLSGKRPQSGWDFVNGTRLSVGEKFLMV</sequence>
<evidence type="ECO:0000255" key="1">
    <source>
        <dbReference type="HAMAP-Rule" id="MF_00182"/>
    </source>
</evidence>
<feature type="chain" id="PRO_1000118474" description="Methionyl-tRNA formyltransferase">
    <location>
        <begin position="1"/>
        <end position="334"/>
    </location>
</feature>
<feature type="binding site" evidence="1">
    <location>
        <begin position="111"/>
        <end position="114"/>
    </location>
    <ligand>
        <name>(6S)-5,6,7,8-tetrahydrofolate</name>
        <dbReference type="ChEBI" id="CHEBI:57453"/>
    </ligand>
</feature>
<proteinExistence type="inferred from homology"/>
<accession>B7KHD0</accession>
<organism>
    <name type="scientific">Gloeothece citriformis (strain PCC 7424)</name>
    <name type="common">Cyanothece sp. (strain PCC 7424)</name>
    <dbReference type="NCBI Taxonomy" id="65393"/>
    <lineage>
        <taxon>Bacteria</taxon>
        <taxon>Bacillati</taxon>
        <taxon>Cyanobacteriota</taxon>
        <taxon>Cyanophyceae</taxon>
        <taxon>Oscillatoriophycideae</taxon>
        <taxon>Chroococcales</taxon>
        <taxon>Aphanothecaceae</taxon>
        <taxon>Gloeothece</taxon>
        <taxon>Gloeothece citriformis</taxon>
    </lineage>
</organism>
<name>FMT_GLOC7</name>
<protein>
    <recommendedName>
        <fullName evidence="1">Methionyl-tRNA formyltransferase</fullName>
        <ecNumber evidence="1">2.1.2.9</ecNumber>
    </recommendedName>
</protein>
<keyword id="KW-0648">Protein biosynthesis</keyword>
<keyword id="KW-1185">Reference proteome</keyword>
<keyword id="KW-0808">Transferase</keyword>
<comment type="function">
    <text evidence="1">Attaches a formyl group to the free amino group of methionyl-tRNA(fMet). The formyl group appears to play a dual role in the initiator identity of N-formylmethionyl-tRNA by promoting its recognition by IF2 and preventing the misappropriation of this tRNA by the elongation apparatus.</text>
</comment>
<comment type="catalytic activity">
    <reaction evidence="1">
        <text>L-methionyl-tRNA(fMet) + (6R)-10-formyltetrahydrofolate = N-formyl-L-methionyl-tRNA(fMet) + (6S)-5,6,7,8-tetrahydrofolate + H(+)</text>
        <dbReference type="Rhea" id="RHEA:24380"/>
        <dbReference type="Rhea" id="RHEA-COMP:9952"/>
        <dbReference type="Rhea" id="RHEA-COMP:9953"/>
        <dbReference type="ChEBI" id="CHEBI:15378"/>
        <dbReference type="ChEBI" id="CHEBI:57453"/>
        <dbReference type="ChEBI" id="CHEBI:78530"/>
        <dbReference type="ChEBI" id="CHEBI:78844"/>
        <dbReference type="ChEBI" id="CHEBI:195366"/>
        <dbReference type="EC" id="2.1.2.9"/>
    </reaction>
</comment>
<comment type="similarity">
    <text evidence="1">Belongs to the Fmt family.</text>
</comment>
<reference key="1">
    <citation type="journal article" date="2011" name="MBio">
        <title>Novel metabolic attributes of the genus Cyanothece, comprising a group of unicellular nitrogen-fixing Cyanobacteria.</title>
        <authorList>
            <person name="Bandyopadhyay A."/>
            <person name="Elvitigala T."/>
            <person name="Welsh E."/>
            <person name="Stockel J."/>
            <person name="Liberton M."/>
            <person name="Min H."/>
            <person name="Sherman L.A."/>
            <person name="Pakrasi H.B."/>
        </authorList>
    </citation>
    <scope>NUCLEOTIDE SEQUENCE [LARGE SCALE GENOMIC DNA]</scope>
    <source>
        <strain>PCC 7424</strain>
    </source>
</reference>